<dbReference type="EMBL" id="CP000003">
    <property type="protein sequence ID" value="AAT86399.1"/>
    <property type="molecule type" value="Genomic_DNA"/>
</dbReference>
<dbReference type="SMR" id="Q5XDW4"/>
<dbReference type="KEGG" id="spa:M6_Spy0264"/>
<dbReference type="HOGENOM" id="CLU_002794_4_1_9"/>
<dbReference type="Proteomes" id="UP000001167">
    <property type="component" value="Chromosome"/>
</dbReference>
<dbReference type="GO" id="GO:0005737">
    <property type="term" value="C:cytoplasm"/>
    <property type="evidence" value="ECO:0007669"/>
    <property type="project" value="UniProtKB-SubCell"/>
</dbReference>
<dbReference type="GO" id="GO:0005525">
    <property type="term" value="F:GTP binding"/>
    <property type="evidence" value="ECO:0007669"/>
    <property type="project" value="UniProtKB-UniRule"/>
</dbReference>
<dbReference type="GO" id="GO:0003924">
    <property type="term" value="F:GTPase activity"/>
    <property type="evidence" value="ECO:0007669"/>
    <property type="project" value="InterPro"/>
</dbReference>
<dbReference type="GO" id="GO:0003746">
    <property type="term" value="F:translation elongation factor activity"/>
    <property type="evidence" value="ECO:0007669"/>
    <property type="project" value="UniProtKB-UniRule"/>
</dbReference>
<dbReference type="GO" id="GO:0032790">
    <property type="term" value="P:ribosome disassembly"/>
    <property type="evidence" value="ECO:0007669"/>
    <property type="project" value="TreeGrafter"/>
</dbReference>
<dbReference type="CDD" id="cd01886">
    <property type="entry name" value="EF-G"/>
    <property type="match status" value="1"/>
</dbReference>
<dbReference type="CDD" id="cd16262">
    <property type="entry name" value="EFG_III"/>
    <property type="match status" value="1"/>
</dbReference>
<dbReference type="CDD" id="cd01434">
    <property type="entry name" value="EFG_mtEFG1_IV"/>
    <property type="match status" value="1"/>
</dbReference>
<dbReference type="CDD" id="cd03713">
    <property type="entry name" value="EFG_mtEFG_C"/>
    <property type="match status" value="1"/>
</dbReference>
<dbReference type="CDD" id="cd04088">
    <property type="entry name" value="EFG_mtEFG_II"/>
    <property type="match status" value="1"/>
</dbReference>
<dbReference type="FunFam" id="2.40.30.10:FF:000006">
    <property type="entry name" value="Elongation factor G"/>
    <property type="match status" value="1"/>
</dbReference>
<dbReference type="FunFam" id="3.30.230.10:FF:000003">
    <property type="entry name" value="Elongation factor G"/>
    <property type="match status" value="1"/>
</dbReference>
<dbReference type="FunFam" id="3.30.70.240:FF:000001">
    <property type="entry name" value="Elongation factor G"/>
    <property type="match status" value="1"/>
</dbReference>
<dbReference type="FunFam" id="3.30.70.870:FF:000001">
    <property type="entry name" value="Elongation factor G"/>
    <property type="match status" value="1"/>
</dbReference>
<dbReference type="FunFam" id="3.40.50.300:FF:000029">
    <property type="entry name" value="Elongation factor G"/>
    <property type="match status" value="1"/>
</dbReference>
<dbReference type="Gene3D" id="3.30.230.10">
    <property type="match status" value="1"/>
</dbReference>
<dbReference type="Gene3D" id="3.30.70.240">
    <property type="match status" value="1"/>
</dbReference>
<dbReference type="Gene3D" id="3.30.70.870">
    <property type="entry name" value="Elongation Factor G (Translational Gtpase), domain 3"/>
    <property type="match status" value="1"/>
</dbReference>
<dbReference type="Gene3D" id="3.40.50.300">
    <property type="entry name" value="P-loop containing nucleotide triphosphate hydrolases"/>
    <property type="match status" value="1"/>
</dbReference>
<dbReference type="Gene3D" id="2.40.30.10">
    <property type="entry name" value="Translation factors"/>
    <property type="match status" value="1"/>
</dbReference>
<dbReference type="HAMAP" id="MF_00054_B">
    <property type="entry name" value="EF_G_EF_2_B"/>
    <property type="match status" value="1"/>
</dbReference>
<dbReference type="InterPro" id="IPR041095">
    <property type="entry name" value="EFG_II"/>
</dbReference>
<dbReference type="InterPro" id="IPR009022">
    <property type="entry name" value="EFG_III"/>
</dbReference>
<dbReference type="InterPro" id="IPR035647">
    <property type="entry name" value="EFG_III/V"/>
</dbReference>
<dbReference type="InterPro" id="IPR047872">
    <property type="entry name" value="EFG_IV"/>
</dbReference>
<dbReference type="InterPro" id="IPR035649">
    <property type="entry name" value="EFG_V"/>
</dbReference>
<dbReference type="InterPro" id="IPR000640">
    <property type="entry name" value="EFG_V-like"/>
</dbReference>
<dbReference type="InterPro" id="IPR004161">
    <property type="entry name" value="EFTu-like_2"/>
</dbReference>
<dbReference type="InterPro" id="IPR031157">
    <property type="entry name" value="G_TR_CS"/>
</dbReference>
<dbReference type="InterPro" id="IPR027417">
    <property type="entry name" value="P-loop_NTPase"/>
</dbReference>
<dbReference type="InterPro" id="IPR020568">
    <property type="entry name" value="Ribosomal_Su5_D2-typ_SF"/>
</dbReference>
<dbReference type="InterPro" id="IPR014721">
    <property type="entry name" value="Ribsml_uS5_D2-typ_fold_subgr"/>
</dbReference>
<dbReference type="InterPro" id="IPR005225">
    <property type="entry name" value="Small_GTP-bd"/>
</dbReference>
<dbReference type="InterPro" id="IPR000795">
    <property type="entry name" value="T_Tr_GTP-bd_dom"/>
</dbReference>
<dbReference type="InterPro" id="IPR009000">
    <property type="entry name" value="Transl_B-barrel_sf"/>
</dbReference>
<dbReference type="InterPro" id="IPR004540">
    <property type="entry name" value="Transl_elong_EFG/EF2"/>
</dbReference>
<dbReference type="InterPro" id="IPR005517">
    <property type="entry name" value="Transl_elong_EFG/EF2_IV"/>
</dbReference>
<dbReference type="NCBIfam" id="TIGR00484">
    <property type="entry name" value="EF-G"/>
    <property type="match status" value="1"/>
</dbReference>
<dbReference type="NCBIfam" id="NF009379">
    <property type="entry name" value="PRK12740.1-3"/>
    <property type="match status" value="1"/>
</dbReference>
<dbReference type="NCBIfam" id="NF009381">
    <property type="entry name" value="PRK12740.1-5"/>
    <property type="match status" value="1"/>
</dbReference>
<dbReference type="NCBIfam" id="TIGR00231">
    <property type="entry name" value="small_GTP"/>
    <property type="match status" value="1"/>
</dbReference>
<dbReference type="PANTHER" id="PTHR43261:SF1">
    <property type="entry name" value="RIBOSOME-RELEASING FACTOR 2, MITOCHONDRIAL"/>
    <property type="match status" value="1"/>
</dbReference>
<dbReference type="PANTHER" id="PTHR43261">
    <property type="entry name" value="TRANSLATION ELONGATION FACTOR G-RELATED"/>
    <property type="match status" value="1"/>
</dbReference>
<dbReference type="Pfam" id="PF00679">
    <property type="entry name" value="EFG_C"/>
    <property type="match status" value="1"/>
</dbReference>
<dbReference type="Pfam" id="PF14492">
    <property type="entry name" value="EFG_III"/>
    <property type="match status" value="1"/>
</dbReference>
<dbReference type="Pfam" id="PF03764">
    <property type="entry name" value="EFG_IV"/>
    <property type="match status" value="1"/>
</dbReference>
<dbReference type="Pfam" id="PF00009">
    <property type="entry name" value="GTP_EFTU"/>
    <property type="match status" value="1"/>
</dbReference>
<dbReference type="Pfam" id="PF03144">
    <property type="entry name" value="GTP_EFTU_D2"/>
    <property type="match status" value="1"/>
</dbReference>
<dbReference type="PRINTS" id="PR00315">
    <property type="entry name" value="ELONGATNFCT"/>
</dbReference>
<dbReference type="SMART" id="SM00838">
    <property type="entry name" value="EFG_C"/>
    <property type="match status" value="1"/>
</dbReference>
<dbReference type="SMART" id="SM00889">
    <property type="entry name" value="EFG_IV"/>
    <property type="match status" value="1"/>
</dbReference>
<dbReference type="SUPFAM" id="SSF54980">
    <property type="entry name" value="EF-G C-terminal domain-like"/>
    <property type="match status" value="2"/>
</dbReference>
<dbReference type="SUPFAM" id="SSF52540">
    <property type="entry name" value="P-loop containing nucleoside triphosphate hydrolases"/>
    <property type="match status" value="1"/>
</dbReference>
<dbReference type="SUPFAM" id="SSF54211">
    <property type="entry name" value="Ribosomal protein S5 domain 2-like"/>
    <property type="match status" value="1"/>
</dbReference>
<dbReference type="SUPFAM" id="SSF50447">
    <property type="entry name" value="Translation proteins"/>
    <property type="match status" value="1"/>
</dbReference>
<dbReference type="PROSITE" id="PS00301">
    <property type="entry name" value="G_TR_1"/>
    <property type="match status" value="1"/>
</dbReference>
<dbReference type="PROSITE" id="PS51722">
    <property type="entry name" value="G_TR_2"/>
    <property type="match status" value="1"/>
</dbReference>
<feature type="initiator methionine" description="Removed" evidence="2">
    <location>
        <position position="1"/>
    </location>
</feature>
<feature type="chain" id="PRO_0000091234" description="Elongation factor G">
    <location>
        <begin position="2"/>
        <end position="692"/>
    </location>
</feature>
<feature type="domain" description="tr-type G">
    <location>
        <begin position="8"/>
        <end position="282"/>
    </location>
</feature>
<feature type="binding site" evidence="1">
    <location>
        <begin position="17"/>
        <end position="24"/>
    </location>
    <ligand>
        <name>GTP</name>
        <dbReference type="ChEBI" id="CHEBI:37565"/>
    </ligand>
</feature>
<feature type="binding site" evidence="1">
    <location>
        <begin position="81"/>
        <end position="85"/>
    </location>
    <ligand>
        <name>GTP</name>
        <dbReference type="ChEBI" id="CHEBI:37565"/>
    </ligand>
</feature>
<feature type="binding site" evidence="1">
    <location>
        <begin position="135"/>
        <end position="138"/>
    </location>
    <ligand>
        <name>GTP</name>
        <dbReference type="ChEBI" id="CHEBI:37565"/>
    </ligand>
</feature>
<comment type="function">
    <text evidence="1">Catalyzes the GTP-dependent ribosomal translocation step during translation elongation. During this step, the ribosome changes from the pre-translocational (PRE) to the post-translocational (POST) state as the newly formed A-site-bound peptidyl-tRNA and P-site-bound deacylated tRNA move to the P and E sites, respectively. Catalyzes the coordinated movement of the two tRNA molecules, the mRNA and conformational changes in the ribosome (By similarity).</text>
</comment>
<comment type="subcellular location">
    <subcellularLocation>
        <location>Cytoplasm</location>
    </subcellularLocation>
</comment>
<comment type="similarity">
    <text evidence="3">Belongs to the TRAFAC class translation factor GTPase superfamily. Classic translation factor GTPase family. EF-G/EF-2 subfamily.</text>
</comment>
<organism>
    <name type="scientific">Streptococcus pyogenes serotype M6 (strain ATCC BAA-946 / MGAS10394)</name>
    <dbReference type="NCBI Taxonomy" id="286636"/>
    <lineage>
        <taxon>Bacteria</taxon>
        <taxon>Bacillati</taxon>
        <taxon>Bacillota</taxon>
        <taxon>Bacilli</taxon>
        <taxon>Lactobacillales</taxon>
        <taxon>Streptococcaceae</taxon>
        <taxon>Streptococcus</taxon>
    </lineage>
</organism>
<proteinExistence type="evidence at protein level"/>
<name>EFG_STRP6</name>
<reference key="1">
    <citation type="journal article" date="2004" name="J. Infect. Dis.">
        <title>Progress toward characterization of the group A Streptococcus metagenome: complete genome sequence of a macrolide-resistant serotype M6 strain.</title>
        <authorList>
            <person name="Banks D.J."/>
            <person name="Porcella S.F."/>
            <person name="Barbian K.D."/>
            <person name="Beres S.B."/>
            <person name="Philips L.E."/>
            <person name="Voyich J.M."/>
            <person name="DeLeo F.R."/>
            <person name="Martin J.M."/>
            <person name="Somerville G.A."/>
            <person name="Musser J.M."/>
        </authorList>
    </citation>
    <scope>NUCLEOTIDE SEQUENCE [LARGE SCALE GENOMIC DNA]</scope>
    <source>
        <strain>ATCC BAA-946 / MGAS10394</strain>
    </source>
</reference>
<reference key="2">
    <citation type="submission" date="2000-05" db="UniProtKB">
        <title>Two-dimensional gel electrophoresis map of Streptococcus pyogenes proteins.</title>
        <authorList>
            <person name="Hogan D.A."/>
            <person name="Du P."/>
            <person name="Stevenson T.I."/>
            <person name="Whitton M."/>
            <person name="Kilby G.W."/>
            <person name="Rogers J."/>
            <person name="VanBogelen R.A."/>
        </authorList>
    </citation>
    <scope>PROTEIN SEQUENCE OF 2-13; 31-39; 77-94; 98-121; 140-173; 181-211; 229-246; 289-328; 395-414; 467-482; 493-497; 520-534; 643-658 AND 665-679</scope>
    <scope>IDENTIFICATION BY MASS SPECTROMETRY</scope>
    <source>
        <strain>JRS4 / Serotype M6</strain>
    </source>
</reference>
<evidence type="ECO:0000250" key="1"/>
<evidence type="ECO:0000269" key="2">
    <source ref="2"/>
</evidence>
<evidence type="ECO:0000305" key="3"/>
<sequence>MAREFSLAKTRNIGIMAHVDAGKTTTTERILYYTGKIHKIGETHEGASQMDWMEQEQERGITITSAATTAQWDGHRVNIIDTPGHVDFTIEVQRSLRVLDGAVTVLDSQSGVEPQTETVWRQATEYGVPRIVFANKMDKIGADFLYSVQTLHDRLQANAHPIQLPIGAEDDFRGIIDLIKMKAEIYTNDLGTDILEEDIPEEYLEQAQEYREKLIEAVAETDEDLMMKYLEGEEITNDELIAGIRKATINVEFFPVLCGSAFKNKGVQLMLDAVIAYLPSPLDIPAIKGVNPDTDAEEERPASDEEPFAALAFKIMTDPFVGRLTFFRVYSGVLNSGSYVMNTSKGKRERIGRILQMHANSRQEIETVYAGDIAAAVGLKDTTTGDSLTDEKAKVILESIEVPEPVIQLMVEPKSKADQDKMGVALQKLAEEDPTFRVETNVETGETVIAGMGELHLDVLVDRMKREFKVEANVGAPQVSYRETFRASTQARGFFKRQSGGKGQFGDVWIEFTPNEEGKGFEFENAIVGGVVPREFIPAVEKGLIESMANGVLAGYPMVDVKAKLYDGSYHDVDSSETAFKIAASLALKEAAKSAQPAILEPMMLVTITAPEDNLGDVMGHVTARRGRVDGMEAHGNSQIVRAYVPLAEMFGYATVLRSATQGRGTFMMVFDHYEDVPKSVQEEIIKKNKGE</sequence>
<gene>
    <name type="primary">fus</name>
    <name type="ordered locus">M6_Spy0264</name>
</gene>
<protein>
    <recommendedName>
        <fullName>Elongation factor G</fullName>
        <shortName>EF-G</shortName>
    </recommendedName>
</protein>
<keyword id="KW-0963">Cytoplasm</keyword>
<keyword id="KW-0903">Direct protein sequencing</keyword>
<keyword id="KW-0251">Elongation factor</keyword>
<keyword id="KW-0342">GTP-binding</keyword>
<keyword id="KW-0547">Nucleotide-binding</keyword>
<keyword id="KW-0648">Protein biosynthesis</keyword>
<accession>Q5XDW4</accession>
<accession>P82477</accession>